<sequence length="247" mass="27759">MSSKLLIDLGSELRYEYNKNGIPSKLHMGSEVIGETTKTTRPDAAKDCWDQYLREKLNEDYVNMRVGVILLGASPARSRCCSIYRNLITSHVEASSPKFKGIKFFLLDDLCDAYTIRGLINCFTNPPFMYISTNSWRGLPLLFNSYVPASAIVNLVSPGKLITIYLITCNNFGDGFIPIAPTTTKLADLFGKTGDLEDFTFQSLRSPLCDVHFCGTRSQLLPFPKDESEYTRALELLYTAMIHSLTY</sequence>
<name>VP10_MYRV9</name>
<reference key="1">
    <citation type="journal article" date="2004" name="J. Gen. Virol.">
        <title>Complete genome sequence of Mycoreovirus-1/Cp9B21, a member of a novel genus within the family Reoviridae, isolated from the chestnut blight fungus Cryphonectria parasitica.</title>
        <authorList>
            <person name="Suzuki N."/>
            <person name="Supyani S."/>
            <person name="Maruyama K."/>
            <person name="Hillman B.I."/>
        </authorList>
    </citation>
    <scope>NUCLEOTIDE SEQUENCE [GENOMIC RNA]</scope>
</reference>
<organismHost>
    <name type="scientific">Cryphonectria parasitica</name>
    <name type="common">Chestnut blight fungus</name>
    <name type="synonym">Endothia parasitica</name>
    <dbReference type="NCBI Taxonomy" id="5116"/>
</organismHost>
<accession>Q65YU6</accession>
<dbReference type="EMBL" id="AB179642">
    <property type="protein sequence ID" value="BAD51420.1"/>
    <property type="molecule type" value="Genomic_RNA"/>
</dbReference>
<dbReference type="RefSeq" id="YP_001936013.1">
    <property type="nucleotide sequence ID" value="NC_010752.1"/>
</dbReference>
<dbReference type="GeneID" id="6334552"/>
<dbReference type="KEGG" id="vg:6334552"/>
<dbReference type="Proteomes" id="UP000006719">
    <property type="component" value="Genome"/>
</dbReference>
<protein>
    <recommendedName>
        <fullName>Uncharacterized protein VP10</fullName>
    </recommendedName>
</protein>
<gene>
    <name type="primary">S10</name>
</gene>
<keyword id="KW-1185">Reference proteome</keyword>
<organism>
    <name type="scientific">Cryphonectria parasitica mycoreovirus 1 (strain 9B21)</name>
    <name type="common">CpMYRV-1</name>
    <dbReference type="NCBI Taxonomy" id="230407"/>
    <lineage>
        <taxon>Viruses</taxon>
        <taxon>Riboviria</taxon>
        <taxon>Orthornavirae</taxon>
        <taxon>Duplornaviricota</taxon>
        <taxon>Resentoviricetes</taxon>
        <taxon>Reovirales</taxon>
        <taxon>Spinareoviridae</taxon>
        <taxon>Mycoreovirus</taxon>
        <taxon>Mycoreovirus 1</taxon>
    </lineage>
</organism>
<feature type="chain" id="PRO_0000403432" description="Uncharacterized protein VP10">
    <location>
        <begin position="1"/>
        <end position="247"/>
    </location>
</feature>
<proteinExistence type="predicted"/>